<comment type="subcellular location">
    <subcellularLocation>
        <location evidence="3">Host membrane</location>
        <topology evidence="3">Single-pass type I membrane protein</topology>
    </subcellularLocation>
</comment>
<organism>
    <name type="scientific">Human herpesvirus 8 type P (isolate GK18)</name>
    <name type="common">HHV-8</name>
    <name type="synonym">Kaposi's sarcoma-associated herpesvirus</name>
    <dbReference type="NCBI Taxonomy" id="868565"/>
    <lineage>
        <taxon>Viruses</taxon>
        <taxon>Duplodnaviria</taxon>
        <taxon>Heunggongvirae</taxon>
        <taxon>Peploviricota</taxon>
        <taxon>Herviviricetes</taxon>
        <taxon>Herpesvirales</taxon>
        <taxon>Orthoherpesviridae</taxon>
        <taxon>Gammaherpesvirinae</taxon>
        <taxon>Rhadinovirus</taxon>
        <taxon>Rhadinovirus humangamma8</taxon>
        <taxon>Human herpesvirus 8</taxon>
    </lineage>
</organism>
<dbReference type="EMBL" id="AF148805">
    <property type="protein sequence ID" value="ABD28902.1"/>
    <property type="molecule type" value="Genomic_DNA"/>
</dbReference>
<dbReference type="RefSeq" id="YP_001129404.1">
    <property type="nucleotide sequence ID" value="NC_009333.1"/>
</dbReference>
<dbReference type="SMR" id="F5HB98"/>
<dbReference type="BioGRID" id="1776972">
    <property type="interactions" value="71"/>
</dbReference>
<dbReference type="GlyCosmos" id="F5HB98">
    <property type="glycosylation" value="4 sites, No reported glycans"/>
</dbReference>
<dbReference type="DNASU" id="4961469"/>
<dbReference type="GeneID" id="4961469"/>
<dbReference type="KEGG" id="vg:4961469"/>
<dbReference type="Proteomes" id="UP000000942">
    <property type="component" value="Segment"/>
</dbReference>
<dbReference type="GO" id="GO:0033644">
    <property type="term" value="C:host cell membrane"/>
    <property type="evidence" value="ECO:0007669"/>
    <property type="project" value="UniProtKB-SubCell"/>
</dbReference>
<dbReference type="GO" id="GO:0016020">
    <property type="term" value="C:membrane"/>
    <property type="evidence" value="ECO:0007669"/>
    <property type="project" value="UniProtKB-KW"/>
</dbReference>
<reference key="1">
    <citation type="journal article" date="1999" name="J. Virol.">
        <title>Identification of a spliced gene from Kaposi's sarcoma-associated herpesvirus encoding a protein with similarities to latent membrane proteins 1 and 2A of Epstein-Barr virus.</title>
        <authorList>
            <person name="Glenn M."/>
            <person name="Rainbow L."/>
            <person name="Aurade F."/>
            <person name="Davison A."/>
            <person name="Schulz T.F."/>
        </authorList>
    </citation>
    <scope>NUCLEOTIDE SEQUENCE [LARGE SCALE GENOMIC DNA]</scope>
</reference>
<reference key="2">
    <citation type="journal article" date="2006" name="J. Gen. Virol.">
        <title>Kaposi's sarcoma-associated herpesvirus immune modulation: an overview.</title>
        <authorList>
            <person name="Rezaee S.A.R."/>
            <person name="Cunningham C."/>
            <person name="Davison A.J."/>
            <person name="Blackbourn D.J."/>
        </authorList>
    </citation>
    <scope>NUCLEOTIDE SEQUENCE [LARGE SCALE GENOMIC DNA]</scope>
</reference>
<accession>F5HB98</accession>
<keyword id="KW-0325">Glycoprotein</keyword>
<keyword id="KW-1043">Host membrane</keyword>
<keyword id="KW-0472">Membrane</keyword>
<keyword id="KW-1185">Reference proteome</keyword>
<keyword id="KW-0732">Signal</keyword>
<keyword id="KW-0812">Transmembrane</keyword>
<keyword id="KW-1133">Transmembrane helix</keyword>
<organismHost>
    <name type="scientific">Homo sapiens</name>
    <name type="common">Human</name>
    <dbReference type="NCBI Taxonomy" id="9606"/>
</organismHost>
<proteinExistence type="inferred from homology"/>
<gene>
    <name type="primary">K8.1</name>
</gene>
<name>K81_HHV8P</name>
<evidence type="ECO:0000255" key="1"/>
<evidence type="ECO:0000256" key="2">
    <source>
        <dbReference type="SAM" id="MobiDB-lite"/>
    </source>
</evidence>
<evidence type="ECO:0000305" key="3"/>
<sequence>MSSTQIRTEIPVALLILCLCLVACHANCPTYRSHLGFWQEGWSGQVYQDWLGRMNCSYENMTALEAVSLNGTRLAAGSPSSEYPNVSVSVEDTSASGSGEDAIDESGSGEEERPVTSHVTFMTQSVQATTELTDALISAFSGSYSSGEPSRTTRIRVSPVAENGRNSGASNRVPFSATTTTTRGRDAHYNAEIRTHLYILWAVGLLLGLVLILYLCVPRCRRKKPYIV</sequence>
<protein>
    <recommendedName>
        <fullName>Protein K8.1</fullName>
    </recommendedName>
</protein>
<feature type="signal peptide" evidence="1">
    <location>
        <begin position="1"/>
        <end position="26"/>
    </location>
</feature>
<feature type="chain" id="PRO_0000423838" description="Protein K8.1">
    <location>
        <begin position="27"/>
        <end position="228"/>
    </location>
</feature>
<feature type="transmembrane region" description="Helical" evidence="1">
    <location>
        <begin position="197"/>
        <end position="217"/>
    </location>
</feature>
<feature type="region of interest" description="Disordered" evidence="2">
    <location>
        <begin position="77"/>
        <end position="113"/>
    </location>
</feature>
<feature type="compositionally biased region" description="Polar residues" evidence="2">
    <location>
        <begin position="78"/>
        <end position="97"/>
    </location>
</feature>
<feature type="glycosylation site" description="N-linked (GlcNAc...) asparagine; by host" evidence="1">
    <location>
        <position position="55"/>
    </location>
</feature>
<feature type="glycosylation site" description="N-linked (GlcNAc...) asparagine; by host" evidence="1">
    <location>
        <position position="60"/>
    </location>
</feature>
<feature type="glycosylation site" description="N-linked (GlcNAc...) asparagine; by host" evidence="1">
    <location>
        <position position="70"/>
    </location>
</feature>
<feature type="glycosylation site" description="N-linked (GlcNAc...) asparagine; by host" evidence="1">
    <location>
        <position position="85"/>
    </location>
</feature>